<comment type="catalytic activity">
    <reaction evidence="1">
        <text>tRNA(Lys) + L-lysine + ATP = L-lysyl-tRNA(Lys) + AMP + diphosphate</text>
        <dbReference type="Rhea" id="RHEA:20792"/>
        <dbReference type="Rhea" id="RHEA-COMP:9696"/>
        <dbReference type="Rhea" id="RHEA-COMP:9697"/>
        <dbReference type="ChEBI" id="CHEBI:30616"/>
        <dbReference type="ChEBI" id="CHEBI:32551"/>
        <dbReference type="ChEBI" id="CHEBI:33019"/>
        <dbReference type="ChEBI" id="CHEBI:78442"/>
        <dbReference type="ChEBI" id="CHEBI:78529"/>
        <dbReference type="ChEBI" id="CHEBI:456215"/>
        <dbReference type="EC" id="6.1.1.6"/>
    </reaction>
</comment>
<comment type="subcellular location">
    <subcellularLocation>
        <location evidence="1">Cytoplasm</location>
    </subcellularLocation>
</comment>
<comment type="similarity">
    <text evidence="1">Belongs to the class-I aminoacyl-tRNA synthetase family.</text>
</comment>
<sequence length="522" mass="59891">MSEIWEDAIKSNAWPFVEAKKILDSLNGQIPEKGYVLFETGYGPSGLPHIGTFGENARMVMVQKAFEQLSDIPTKLICFSDDMDGLRKVPSNIPNPEMVAQYMDMPLTSIPDTFGECESYGHYMNAKLRSFLDKFGFEYEFYSSTNCYKAGMFDEMLIMVLEKYDEIMELMLPTFREERKATYSPFMPICPKTGKVLQVPIEKWDAKAGTVTYKDKAGNYIEVPVTGGHCKLQWKPDFGMRWAALKVDYEMYGKDHLANARLYSEICRILGGKPPVQLCYELFLDENGEKISKSKGNSISIDDWLKYAPVESMALFMYQNPTRAKRLFFDVIPKNVDEYITFNQKYHLEEDRAKRVANPVYHIHHGNVPKIETFGITYSLLLNLTSVCNPSDKSVLWGFISKYEPQATPNTNPYLDHLAEFAIRYYNDFIKAHKSYLSPSEKHKVILQDILDMLSDIADQTEAEAIQKAIYDIGMKAGYANLRDYFKDLYQILLGQNEGPRLGTFIKLYGVQEMKKLVEGQL</sequence>
<feature type="chain" id="PRO_1000077223" description="Lysine--tRNA ligase">
    <location>
        <begin position="1"/>
        <end position="522"/>
    </location>
</feature>
<feature type="short sequence motif" description="'HIGH' region">
    <location>
        <begin position="44"/>
        <end position="52"/>
    </location>
</feature>
<feature type="short sequence motif" description="'KMSKS' region">
    <location>
        <begin position="290"/>
        <end position="294"/>
    </location>
</feature>
<feature type="binding site" evidence="1">
    <location>
        <position position="293"/>
    </location>
    <ligand>
        <name>ATP</name>
        <dbReference type="ChEBI" id="CHEBI:30616"/>
    </ligand>
</feature>
<accession>B0BX92</accession>
<protein>
    <recommendedName>
        <fullName evidence="1">Lysine--tRNA ligase</fullName>
        <ecNumber evidence="1">6.1.1.6</ecNumber>
    </recommendedName>
    <alternativeName>
        <fullName evidence="1">Lysyl-tRNA synthetase</fullName>
        <shortName evidence="1">LysRS</shortName>
    </alternativeName>
</protein>
<name>SYK_RICRO</name>
<reference key="1">
    <citation type="journal article" date="2008" name="Infect. Immun.">
        <title>Genomic comparison of virulent Rickettsia rickettsii Sheila Smith and avirulent Rickettsia rickettsii Iowa.</title>
        <authorList>
            <person name="Ellison D.W."/>
            <person name="Clark T.R."/>
            <person name="Sturdevant D.E."/>
            <person name="Virtaneva K."/>
            <person name="Porcella S.F."/>
            <person name="Hackstadt T."/>
        </authorList>
    </citation>
    <scope>NUCLEOTIDE SEQUENCE [LARGE SCALE GENOMIC DNA]</scope>
    <source>
        <strain>Iowa</strain>
    </source>
</reference>
<organism>
    <name type="scientific">Rickettsia rickettsii (strain Iowa)</name>
    <dbReference type="NCBI Taxonomy" id="452659"/>
    <lineage>
        <taxon>Bacteria</taxon>
        <taxon>Pseudomonadati</taxon>
        <taxon>Pseudomonadota</taxon>
        <taxon>Alphaproteobacteria</taxon>
        <taxon>Rickettsiales</taxon>
        <taxon>Rickettsiaceae</taxon>
        <taxon>Rickettsieae</taxon>
        <taxon>Rickettsia</taxon>
        <taxon>spotted fever group</taxon>
    </lineage>
</organism>
<keyword id="KW-0030">Aminoacyl-tRNA synthetase</keyword>
<keyword id="KW-0067">ATP-binding</keyword>
<keyword id="KW-0963">Cytoplasm</keyword>
<keyword id="KW-0436">Ligase</keyword>
<keyword id="KW-0547">Nucleotide-binding</keyword>
<keyword id="KW-0648">Protein biosynthesis</keyword>
<gene>
    <name evidence="1" type="primary">lysS</name>
    <name type="ordered locus">RrIowa_0600</name>
</gene>
<dbReference type="EC" id="6.1.1.6" evidence="1"/>
<dbReference type="EMBL" id="CP000766">
    <property type="protein sequence ID" value="ABY72468.1"/>
    <property type="molecule type" value="Genomic_DNA"/>
</dbReference>
<dbReference type="RefSeq" id="WP_012150703.1">
    <property type="nucleotide sequence ID" value="NC_010263.3"/>
</dbReference>
<dbReference type="SMR" id="B0BX92"/>
<dbReference type="KEGG" id="rrj:RrIowa_0600"/>
<dbReference type="eggNOG" id="COG1384">
    <property type="taxonomic scope" value="Bacteria"/>
</dbReference>
<dbReference type="HOGENOM" id="CLU_025562_2_0_5"/>
<dbReference type="Proteomes" id="UP000000796">
    <property type="component" value="Chromosome"/>
</dbReference>
<dbReference type="GO" id="GO:0005737">
    <property type="term" value="C:cytoplasm"/>
    <property type="evidence" value="ECO:0007669"/>
    <property type="project" value="UniProtKB-SubCell"/>
</dbReference>
<dbReference type="GO" id="GO:0005524">
    <property type="term" value="F:ATP binding"/>
    <property type="evidence" value="ECO:0007669"/>
    <property type="project" value="UniProtKB-UniRule"/>
</dbReference>
<dbReference type="GO" id="GO:0004824">
    <property type="term" value="F:lysine-tRNA ligase activity"/>
    <property type="evidence" value="ECO:0007669"/>
    <property type="project" value="UniProtKB-UniRule"/>
</dbReference>
<dbReference type="GO" id="GO:0000049">
    <property type="term" value="F:tRNA binding"/>
    <property type="evidence" value="ECO:0007669"/>
    <property type="project" value="InterPro"/>
</dbReference>
<dbReference type="GO" id="GO:0006430">
    <property type="term" value="P:lysyl-tRNA aminoacylation"/>
    <property type="evidence" value="ECO:0007669"/>
    <property type="project" value="UniProtKB-UniRule"/>
</dbReference>
<dbReference type="Gene3D" id="1.10.10.350">
    <property type="match status" value="1"/>
</dbReference>
<dbReference type="Gene3D" id="3.40.50.620">
    <property type="entry name" value="HUPs"/>
    <property type="match status" value="2"/>
</dbReference>
<dbReference type="HAMAP" id="MF_00177">
    <property type="entry name" value="Lys_tRNA_synth_class1"/>
    <property type="match status" value="1"/>
</dbReference>
<dbReference type="InterPro" id="IPR020751">
    <property type="entry name" value="aa-tRNA-synth_I_codon-bd_sub2"/>
</dbReference>
<dbReference type="InterPro" id="IPR001412">
    <property type="entry name" value="aa-tRNA-synth_I_CS"/>
</dbReference>
<dbReference type="InterPro" id="IPR008925">
    <property type="entry name" value="aa_tRNA-synth_I_cd-bd_sf"/>
</dbReference>
<dbReference type="InterPro" id="IPR002904">
    <property type="entry name" value="Lys-tRNA-ligase"/>
</dbReference>
<dbReference type="InterPro" id="IPR014729">
    <property type="entry name" value="Rossmann-like_a/b/a_fold"/>
</dbReference>
<dbReference type="NCBIfam" id="TIGR00467">
    <property type="entry name" value="lysS_arch"/>
    <property type="match status" value="1"/>
</dbReference>
<dbReference type="NCBIfam" id="NF001968">
    <property type="entry name" value="PRK00750.1-2"/>
    <property type="match status" value="1"/>
</dbReference>
<dbReference type="PANTHER" id="PTHR37940">
    <property type="entry name" value="LYSINE--TRNA LIGASE"/>
    <property type="match status" value="1"/>
</dbReference>
<dbReference type="PANTHER" id="PTHR37940:SF1">
    <property type="entry name" value="LYSINE--TRNA LIGASE"/>
    <property type="match status" value="1"/>
</dbReference>
<dbReference type="Pfam" id="PF01921">
    <property type="entry name" value="tRNA-synt_1f"/>
    <property type="match status" value="1"/>
</dbReference>
<dbReference type="SUPFAM" id="SSF48163">
    <property type="entry name" value="An anticodon-binding domain of class I aminoacyl-tRNA synthetases"/>
    <property type="match status" value="1"/>
</dbReference>
<dbReference type="SUPFAM" id="SSF52374">
    <property type="entry name" value="Nucleotidylyl transferase"/>
    <property type="match status" value="1"/>
</dbReference>
<dbReference type="PROSITE" id="PS00178">
    <property type="entry name" value="AA_TRNA_LIGASE_I"/>
    <property type="match status" value="1"/>
</dbReference>
<proteinExistence type="inferred from homology"/>
<evidence type="ECO:0000255" key="1">
    <source>
        <dbReference type="HAMAP-Rule" id="MF_00177"/>
    </source>
</evidence>